<keyword id="KW-0030">Aminoacyl-tRNA synthetase</keyword>
<keyword id="KW-0067">ATP-binding</keyword>
<keyword id="KW-0963">Cytoplasm</keyword>
<keyword id="KW-0436">Ligase</keyword>
<keyword id="KW-0460">Magnesium</keyword>
<keyword id="KW-0479">Metal-binding</keyword>
<keyword id="KW-0547">Nucleotide-binding</keyword>
<keyword id="KW-0648">Protein biosynthesis</keyword>
<keyword id="KW-1185">Reference proteome</keyword>
<organism>
    <name type="scientific">Actinobacillus pleuropneumoniae serotype 5b (strain L20)</name>
    <dbReference type="NCBI Taxonomy" id="416269"/>
    <lineage>
        <taxon>Bacteria</taxon>
        <taxon>Pseudomonadati</taxon>
        <taxon>Pseudomonadota</taxon>
        <taxon>Gammaproteobacteria</taxon>
        <taxon>Pasteurellales</taxon>
        <taxon>Pasteurellaceae</taxon>
        <taxon>Actinobacillus</taxon>
    </lineage>
</organism>
<sequence length="328" mass="37624">MQHLKELTEKARNALDALDQGLDALEEFRVEYFGKKGHFTALMQELRNVSAEERPAIGAKINEAKQAILDILNAKKEAWEQEALNAKLAAESIDVSLPGRKTELGGLHPVSITIERVVKFFSELGFTVASGPEIETDYYNFDALNIPAHHPARADHDTFWFDAQRLLRTQTSGVQIRTMENMQPPIRIVAPGRVYRNDYDQTHTPMFHQIELLYVDKKANFTELKGLIHDFLKAFFEEDLQVRFRPSFFPFTEPSAEVDVMRQNGKWLEVLGCGMVHPNVLRNVGIDPEEYSGFAVGMGVERLTMLRYNVTDLRSFFENDLRFLKQFK</sequence>
<accession>A3MZX4</accession>
<feature type="chain" id="PRO_1000006793" description="Phenylalanine--tRNA ligase alpha subunit">
    <location>
        <begin position="1"/>
        <end position="328"/>
    </location>
</feature>
<feature type="binding site" evidence="1">
    <location>
        <position position="253"/>
    </location>
    <ligand>
        <name>Mg(2+)</name>
        <dbReference type="ChEBI" id="CHEBI:18420"/>
        <note>shared with beta subunit</note>
    </ligand>
</feature>
<comment type="catalytic activity">
    <reaction evidence="1">
        <text>tRNA(Phe) + L-phenylalanine + ATP = L-phenylalanyl-tRNA(Phe) + AMP + diphosphate + H(+)</text>
        <dbReference type="Rhea" id="RHEA:19413"/>
        <dbReference type="Rhea" id="RHEA-COMP:9668"/>
        <dbReference type="Rhea" id="RHEA-COMP:9699"/>
        <dbReference type="ChEBI" id="CHEBI:15378"/>
        <dbReference type="ChEBI" id="CHEBI:30616"/>
        <dbReference type="ChEBI" id="CHEBI:33019"/>
        <dbReference type="ChEBI" id="CHEBI:58095"/>
        <dbReference type="ChEBI" id="CHEBI:78442"/>
        <dbReference type="ChEBI" id="CHEBI:78531"/>
        <dbReference type="ChEBI" id="CHEBI:456215"/>
        <dbReference type="EC" id="6.1.1.20"/>
    </reaction>
</comment>
<comment type="cofactor">
    <cofactor evidence="1">
        <name>Mg(2+)</name>
        <dbReference type="ChEBI" id="CHEBI:18420"/>
    </cofactor>
    <text evidence="1">Binds 2 magnesium ions per tetramer.</text>
</comment>
<comment type="subunit">
    <text evidence="1">Tetramer of two alpha and two beta subunits.</text>
</comment>
<comment type="subcellular location">
    <subcellularLocation>
        <location evidence="1">Cytoplasm</location>
    </subcellularLocation>
</comment>
<comment type="similarity">
    <text evidence="1">Belongs to the class-II aminoacyl-tRNA synthetase family. Phe-tRNA synthetase alpha subunit type 1 subfamily.</text>
</comment>
<evidence type="ECO:0000255" key="1">
    <source>
        <dbReference type="HAMAP-Rule" id="MF_00281"/>
    </source>
</evidence>
<protein>
    <recommendedName>
        <fullName evidence="1">Phenylalanine--tRNA ligase alpha subunit</fullName>
        <ecNumber evidence="1">6.1.1.20</ecNumber>
    </recommendedName>
    <alternativeName>
        <fullName evidence="1">Phenylalanyl-tRNA synthetase alpha subunit</fullName>
        <shortName evidence="1">PheRS</shortName>
    </alternativeName>
</protein>
<reference key="1">
    <citation type="journal article" date="2008" name="J. Bacteriol.">
        <title>The complete genome sequence of Actinobacillus pleuropneumoniae L20 (serotype 5b).</title>
        <authorList>
            <person name="Foote S.J."/>
            <person name="Bosse J.T."/>
            <person name="Bouevitch A.B."/>
            <person name="Langford P.R."/>
            <person name="Young N.M."/>
            <person name="Nash J.H.E."/>
        </authorList>
    </citation>
    <scope>NUCLEOTIDE SEQUENCE [LARGE SCALE GENOMIC DNA]</scope>
    <source>
        <strain>L20</strain>
    </source>
</reference>
<dbReference type="EC" id="6.1.1.20" evidence="1"/>
<dbReference type="EMBL" id="CP000569">
    <property type="protein sequence ID" value="ABN73710.1"/>
    <property type="molecule type" value="Genomic_DNA"/>
</dbReference>
<dbReference type="RefSeq" id="WP_005607445.1">
    <property type="nucleotide sequence ID" value="NC_009053.1"/>
</dbReference>
<dbReference type="SMR" id="A3MZX4"/>
<dbReference type="STRING" id="416269.APL_0608"/>
<dbReference type="EnsemblBacteria" id="ABN73710">
    <property type="protein sequence ID" value="ABN73710"/>
    <property type="gene ID" value="APL_0608"/>
</dbReference>
<dbReference type="KEGG" id="apl:APL_0608"/>
<dbReference type="eggNOG" id="COG0016">
    <property type="taxonomic scope" value="Bacteria"/>
</dbReference>
<dbReference type="HOGENOM" id="CLU_025086_0_1_6"/>
<dbReference type="Proteomes" id="UP000001432">
    <property type="component" value="Chromosome"/>
</dbReference>
<dbReference type="GO" id="GO:0005737">
    <property type="term" value="C:cytoplasm"/>
    <property type="evidence" value="ECO:0007669"/>
    <property type="project" value="UniProtKB-SubCell"/>
</dbReference>
<dbReference type="GO" id="GO:0005524">
    <property type="term" value="F:ATP binding"/>
    <property type="evidence" value="ECO:0007669"/>
    <property type="project" value="UniProtKB-UniRule"/>
</dbReference>
<dbReference type="GO" id="GO:0000287">
    <property type="term" value="F:magnesium ion binding"/>
    <property type="evidence" value="ECO:0007669"/>
    <property type="project" value="UniProtKB-UniRule"/>
</dbReference>
<dbReference type="GO" id="GO:0004826">
    <property type="term" value="F:phenylalanine-tRNA ligase activity"/>
    <property type="evidence" value="ECO:0007669"/>
    <property type="project" value="UniProtKB-UniRule"/>
</dbReference>
<dbReference type="GO" id="GO:0000049">
    <property type="term" value="F:tRNA binding"/>
    <property type="evidence" value="ECO:0007669"/>
    <property type="project" value="InterPro"/>
</dbReference>
<dbReference type="GO" id="GO:0006432">
    <property type="term" value="P:phenylalanyl-tRNA aminoacylation"/>
    <property type="evidence" value="ECO:0007669"/>
    <property type="project" value="UniProtKB-UniRule"/>
</dbReference>
<dbReference type="CDD" id="cd00496">
    <property type="entry name" value="PheRS_alpha_core"/>
    <property type="match status" value="1"/>
</dbReference>
<dbReference type="FunFam" id="3.30.930.10:FF:000003">
    <property type="entry name" value="Phenylalanine--tRNA ligase alpha subunit"/>
    <property type="match status" value="1"/>
</dbReference>
<dbReference type="Gene3D" id="3.30.930.10">
    <property type="entry name" value="Bira Bifunctional Protein, Domain 2"/>
    <property type="match status" value="1"/>
</dbReference>
<dbReference type="HAMAP" id="MF_00281">
    <property type="entry name" value="Phe_tRNA_synth_alpha1"/>
    <property type="match status" value="1"/>
</dbReference>
<dbReference type="InterPro" id="IPR006195">
    <property type="entry name" value="aa-tRNA-synth_II"/>
</dbReference>
<dbReference type="InterPro" id="IPR045864">
    <property type="entry name" value="aa-tRNA-synth_II/BPL/LPL"/>
</dbReference>
<dbReference type="InterPro" id="IPR004529">
    <property type="entry name" value="Phe-tRNA-synth_IIc_asu"/>
</dbReference>
<dbReference type="InterPro" id="IPR004188">
    <property type="entry name" value="Phe-tRNA_ligase_II_N"/>
</dbReference>
<dbReference type="InterPro" id="IPR022911">
    <property type="entry name" value="Phe_tRNA_ligase_alpha1_bac"/>
</dbReference>
<dbReference type="InterPro" id="IPR002319">
    <property type="entry name" value="Phenylalanyl-tRNA_Synthase"/>
</dbReference>
<dbReference type="InterPro" id="IPR010978">
    <property type="entry name" value="tRNA-bd_arm"/>
</dbReference>
<dbReference type="NCBIfam" id="TIGR00468">
    <property type="entry name" value="pheS"/>
    <property type="match status" value="1"/>
</dbReference>
<dbReference type="PANTHER" id="PTHR11538:SF41">
    <property type="entry name" value="PHENYLALANINE--TRNA LIGASE, MITOCHONDRIAL"/>
    <property type="match status" value="1"/>
</dbReference>
<dbReference type="PANTHER" id="PTHR11538">
    <property type="entry name" value="PHENYLALANYL-TRNA SYNTHETASE"/>
    <property type="match status" value="1"/>
</dbReference>
<dbReference type="Pfam" id="PF02912">
    <property type="entry name" value="Phe_tRNA-synt_N"/>
    <property type="match status" value="1"/>
</dbReference>
<dbReference type="Pfam" id="PF01409">
    <property type="entry name" value="tRNA-synt_2d"/>
    <property type="match status" value="1"/>
</dbReference>
<dbReference type="SUPFAM" id="SSF55681">
    <property type="entry name" value="Class II aaRS and biotin synthetases"/>
    <property type="match status" value="1"/>
</dbReference>
<dbReference type="SUPFAM" id="SSF46589">
    <property type="entry name" value="tRNA-binding arm"/>
    <property type="match status" value="1"/>
</dbReference>
<dbReference type="PROSITE" id="PS50862">
    <property type="entry name" value="AA_TRNA_LIGASE_II"/>
    <property type="match status" value="1"/>
</dbReference>
<proteinExistence type="inferred from homology"/>
<gene>
    <name evidence="1" type="primary">pheS</name>
    <name type="ordered locus">APL_0608</name>
</gene>
<name>SYFA_ACTP2</name>